<protein>
    <recommendedName>
        <fullName>Larval cuticle protein LCP-22</fullName>
    </recommendedName>
</protein>
<gene>
    <name type="primary">LCP22</name>
</gene>
<evidence type="ECO:0000255" key="1"/>
<evidence type="ECO:0000255" key="2">
    <source>
        <dbReference type="PROSITE-ProRule" id="PRU00497"/>
    </source>
</evidence>
<reference key="1">
    <citation type="journal article" date="1997" name="Insect Biochem. Mol. Biol.">
        <title>Purification and cDNA cloning of evolutionally conserved larval cuticle proteins of the silkworm, Bombyx mori.</title>
        <authorList>
            <person name="Nakato H."/>
            <person name="Takekoshi M."/>
            <person name="Togawa T."/>
            <person name="Izumi S."/>
            <person name="Tomino S."/>
        </authorList>
    </citation>
    <scope>NUCLEOTIDE SEQUENCE [MRNA]</scope>
    <source>
        <strain>Kinshu X Showa</strain>
        <tissue>Epidermis</tissue>
    </source>
</reference>
<feature type="signal peptide" evidence="1">
    <location>
        <begin position="1"/>
        <end position="16"/>
    </location>
</feature>
<feature type="chain" id="PRO_0000006405" description="Larval cuticle protein LCP-22">
    <location>
        <begin position="17"/>
        <end position="174"/>
    </location>
</feature>
<feature type="domain" description="Chitin-binding type R&amp;R" evidence="2">
    <location>
        <begin position="82"/>
        <end position="153"/>
    </location>
</feature>
<proteinExistence type="evidence at transcript level"/>
<organism>
    <name type="scientific">Bombyx mori</name>
    <name type="common">Silk moth</name>
    <dbReference type="NCBI Taxonomy" id="7091"/>
    <lineage>
        <taxon>Eukaryota</taxon>
        <taxon>Metazoa</taxon>
        <taxon>Ecdysozoa</taxon>
        <taxon>Arthropoda</taxon>
        <taxon>Hexapoda</taxon>
        <taxon>Insecta</taxon>
        <taxon>Pterygota</taxon>
        <taxon>Neoptera</taxon>
        <taxon>Endopterygota</taxon>
        <taxon>Lepidoptera</taxon>
        <taxon>Glossata</taxon>
        <taxon>Ditrysia</taxon>
        <taxon>Bombycoidea</taxon>
        <taxon>Bombycidae</taxon>
        <taxon>Bombycinae</taxon>
        <taxon>Bombyx</taxon>
    </lineage>
</organism>
<name>CU22_BOMMO</name>
<dbReference type="EMBL" id="AB004767">
    <property type="protein sequence ID" value="BAA20475.1"/>
    <property type="molecule type" value="mRNA"/>
</dbReference>
<dbReference type="RefSeq" id="NP_001036828.1">
    <property type="nucleotide sequence ID" value="NM_001043363.1"/>
</dbReference>
<dbReference type="STRING" id="7091.O02388"/>
<dbReference type="PaxDb" id="7091-BGIBMGA000333-TA"/>
<dbReference type="EnsemblMetazoa" id="NM_001043363.1">
    <property type="protein sequence ID" value="NP_001036828.1"/>
    <property type="gene ID" value="GeneID_692363"/>
</dbReference>
<dbReference type="GeneID" id="692363"/>
<dbReference type="KEGG" id="bmor:692363"/>
<dbReference type="CTD" id="692363"/>
<dbReference type="eggNOG" id="ENOG502T7F2">
    <property type="taxonomic scope" value="Eukaryota"/>
</dbReference>
<dbReference type="HOGENOM" id="CLU_065450_3_0_1"/>
<dbReference type="InParanoid" id="O02388"/>
<dbReference type="OMA" id="FYETNNG"/>
<dbReference type="OrthoDB" id="584936at7088"/>
<dbReference type="Proteomes" id="UP000005204">
    <property type="component" value="Unassembled WGS sequence"/>
</dbReference>
<dbReference type="GO" id="GO:0062129">
    <property type="term" value="C:chitin-based extracellular matrix"/>
    <property type="evidence" value="ECO:0007669"/>
    <property type="project" value="TreeGrafter"/>
</dbReference>
<dbReference type="GO" id="GO:0008010">
    <property type="term" value="F:structural constituent of chitin-based larval cuticle"/>
    <property type="evidence" value="ECO:0007669"/>
    <property type="project" value="TreeGrafter"/>
</dbReference>
<dbReference type="InterPro" id="IPR031311">
    <property type="entry name" value="CHIT_BIND_RR_consensus"/>
</dbReference>
<dbReference type="InterPro" id="IPR050468">
    <property type="entry name" value="Cuticle_Struct_Prot"/>
</dbReference>
<dbReference type="InterPro" id="IPR000618">
    <property type="entry name" value="Insect_cuticle"/>
</dbReference>
<dbReference type="PANTHER" id="PTHR10380">
    <property type="entry name" value="CUTICLE PROTEIN"/>
    <property type="match status" value="1"/>
</dbReference>
<dbReference type="PANTHER" id="PTHR10380:SF238">
    <property type="entry name" value="CUTICULAR PROTEIN 65EA-RELATED"/>
    <property type="match status" value="1"/>
</dbReference>
<dbReference type="Pfam" id="PF00379">
    <property type="entry name" value="Chitin_bind_4"/>
    <property type="match status" value="1"/>
</dbReference>
<dbReference type="PRINTS" id="PR00947">
    <property type="entry name" value="CUTICLE"/>
</dbReference>
<dbReference type="PROSITE" id="PS00233">
    <property type="entry name" value="CHIT_BIND_RR_1"/>
    <property type="match status" value="1"/>
</dbReference>
<dbReference type="PROSITE" id="PS51155">
    <property type="entry name" value="CHIT_BIND_RR_2"/>
    <property type="match status" value="1"/>
</dbReference>
<comment type="function">
    <text>Component of the cuticle of the larva of Bombyx mori.</text>
</comment>
<accession>O02388</accession>
<keyword id="KW-0193">Cuticle</keyword>
<keyword id="KW-1185">Reference proteome</keyword>
<keyword id="KW-0732">Signal</keyword>
<sequence length="174" mass="18852">MKFAVVFACMVAAVAAQVRYENEFYKKNPYRYSTYRPFVSVTTPTPFLPIPISSVAPVRVVPKVSEGYGAETVKFGNEINPDGSYTYFYETNNGIAAQEQGVPRNLGGNPPAVPVVAQGSFSWTSPEGVPISVNYVADENGYQPTGNAIPTSPPVPEQIARALAYIAKNIPLKK</sequence>